<evidence type="ECO:0000250" key="1"/>
<evidence type="ECO:0000269" key="2">
    <source>
    </source>
</evidence>
<evidence type="ECO:0000305" key="3"/>
<evidence type="ECO:0007744" key="4">
    <source>
        <dbReference type="PDB" id="1M0G"/>
    </source>
</evidence>
<evidence type="ECO:0007744" key="5">
    <source>
        <dbReference type="PDB" id="1M0J"/>
    </source>
</evidence>
<evidence type="ECO:0007829" key="6">
    <source>
        <dbReference type="PDB" id="1M0G"/>
    </source>
</evidence>
<evidence type="ECO:0007829" key="7">
    <source>
        <dbReference type="PDB" id="1M0J"/>
    </source>
</evidence>
<sequence>MDPCECSKSGTCNCGGSCTCTNCSCKSCKKSCCPCCPSGCTKCASGCVCKGKTCDTSCCQ</sequence>
<proteinExistence type="evidence at protein level"/>
<gene>
    <name type="primary">mta</name>
</gene>
<organism>
    <name type="scientific">Notothenia neglecta</name>
    <name type="common">Yellowbelly rockcod</name>
    <name type="synonym">Notothenia coriiceps neglecta</name>
    <dbReference type="NCBI Taxonomy" id="202063"/>
    <lineage>
        <taxon>Eukaryota</taxon>
        <taxon>Metazoa</taxon>
        <taxon>Chordata</taxon>
        <taxon>Craniata</taxon>
        <taxon>Vertebrata</taxon>
        <taxon>Euteleostomi</taxon>
        <taxon>Actinopterygii</taxon>
        <taxon>Neopterygii</taxon>
        <taxon>Teleostei</taxon>
        <taxon>Neoteleostei</taxon>
        <taxon>Acanthomorphata</taxon>
        <taxon>Eupercaria</taxon>
        <taxon>Perciformes</taxon>
        <taxon>Notothenioidei</taxon>
        <taxon>Nototheniidae</taxon>
        <taxon>Notothenia</taxon>
    </lineage>
</organism>
<feature type="chain" id="PRO_0000197293" description="Metallothionein A">
    <location>
        <begin position="1"/>
        <end position="60"/>
    </location>
</feature>
<feature type="region of interest" description="Beta">
    <location>
        <begin position="1"/>
        <end position="28"/>
    </location>
</feature>
<feature type="region of interest" description="Alpha">
    <location>
        <begin position="29"/>
        <end position="60"/>
    </location>
</feature>
<feature type="binding site" evidence="2 5">
    <location>
        <position position="4"/>
    </location>
    <ligand>
        <name>a divalent metal cation</name>
        <dbReference type="ChEBI" id="CHEBI:60240"/>
        <label>1</label>
        <note>in cluster B</note>
    </ligand>
</feature>
<feature type="binding site" evidence="2 5">
    <location>
        <position position="6"/>
    </location>
    <ligand>
        <name>a divalent metal cation</name>
        <dbReference type="ChEBI" id="CHEBI:60240"/>
        <label>1</label>
        <note>in cluster B</note>
    </ligand>
</feature>
<feature type="binding site" evidence="2 5">
    <location>
        <position position="6"/>
    </location>
    <ligand>
        <name>a divalent metal cation</name>
        <dbReference type="ChEBI" id="CHEBI:60240"/>
        <label>2</label>
        <note>in cluster B</note>
    </ligand>
</feature>
<feature type="binding site" evidence="2 5">
    <location>
        <position position="12"/>
    </location>
    <ligand>
        <name>a divalent metal cation</name>
        <dbReference type="ChEBI" id="CHEBI:60240"/>
        <label>2</label>
        <note>in cluster B</note>
    </ligand>
</feature>
<feature type="binding site" evidence="2 5">
    <location>
        <position position="14"/>
    </location>
    <ligand>
        <name>a divalent metal cation</name>
        <dbReference type="ChEBI" id="CHEBI:60240"/>
        <label>2</label>
        <note>in cluster B</note>
    </ligand>
</feature>
<feature type="binding site" evidence="2 5">
    <location>
        <position position="14"/>
    </location>
    <ligand>
        <name>a divalent metal cation</name>
        <dbReference type="ChEBI" id="CHEBI:60240"/>
        <label>3</label>
        <note>in cluster B</note>
    </ligand>
</feature>
<feature type="binding site" evidence="2 5">
    <location>
        <position position="18"/>
    </location>
    <ligand>
        <name>a divalent metal cation</name>
        <dbReference type="ChEBI" id="CHEBI:60240"/>
        <label>3</label>
        <note>in cluster B</note>
    </ligand>
</feature>
<feature type="binding site" evidence="2 5">
    <location>
        <position position="20"/>
    </location>
    <ligand>
        <name>a divalent metal cation</name>
        <dbReference type="ChEBI" id="CHEBI:60240"/>
        <label>1</label>
        <note>in cluster B</note>
    </ligand>
</feature>
<feature type="binding site" evidence="2 5">
    <location>
        <position position="23"/>
    </location>
    <ligand>
        <name>a divalent metal cation</name>
        <dbReference type="ChEBI" id="CHEBI:60240"/>
        <label>1</label>
        <note>in cluster B</note>
    </ligand>
</feature>
<feature type="binding site" evidence="2 5">
    <location>
        <position position="23"/>
    </location>
    <ligand>
        <name>a divalent metal cation</name>
        <dbReference type="ChEBI" id="CHEBI:60240"/>
        <label>3</label>
        <note>in cluster B</note>
    </ligand>
</feature>
<feature type="binding site" evidence="2 5">
    <location>
        <position position="25"/>
    </location>
    <ligand>
        <name>a divalent metal cation</name>
        <dbReference type="ChEBI" id="CHEBI:60240"/>
        <label>2</label>
        <note>in cluster B</note>
    </ligand>
</feature>
<feature type="binding site" evidence="2 5">
    <location>
        <position position="28"/>
    </location>
    <ligand>
        <name>a divalent metal cation</name>
        <dbReference type="ChEBI" id="CHEBI:60240"/>
        <label>3</label>
        <note>in cluster B</note>
    </ligand>
</feature>
<feature type="binding site" evidence="2 4">
    <location>
        <position position="32"/>
    </location>
    <ligand>
        <name>a divalent metal cation</name>
        <dbReference type="ChEBI" id="CHEBI:60240"/>
        <label>4</label>
        <note>in cluster A</note>
    </ligand>
</feature>
<feature type="binding site" evidence="2 4">
    <location>
        <position position="33"/>
    </location>
    <ligand>
        <name>a divalent metal cation</name>
        <dbReference type="ChEBI" id="CHEBI:60240"/>
        <label>4</label>
        <note>in cluster A</note>
    </ligand>
</feature>
<feature type="binding site" evidence="2 4">
    <location>
        <position position="33"/>
    </location>
    <ligand>
        <name>a divalent metal cation</name>
        <dbReference type="ChEBI" id="CHEBI:60240"/>
        <label>5</label>
        <note>in cluster A</note>
    </ligand>
</feature>
<feature type="binding site" evidence="2 4">
    <location>
        <position position="35"/>
    </location>
    <ligand>
        <name>a divalent metal cation</name>
        <dbReference type="ChEBI" id="CHEBI:60240"/>
        <label>5</label>
        <note>in cluster A</note>
    </ligand>
</feature>
<feature type="binding site" evidence="2 4">
    <location>
        <position position="36"/>
    </location>
    <ligand>
        <name>a divalent metal cation</name>
        <dbReference type="ChEBI" id="CHEBI:60240"/>
        <label>5</label>
        <note>in cluster A</note>
    </ligand>
</feature>
<feature type="binding site" evidence="2 4">
    <location>
        <position position="36"/>
    </location>
    <ligand>
        <name>a divalent metal cation</name>
        <dbReference type="ChEBI" id="CHEBI:60240"/>
        <label>6</label>
        <note>in cluster A</note>
    </ligand>
</feature>
<feature type="binding site" evidence="2 4">
    <location>
        <position position="40"/>
    </location>
    <ligand>
        <name>a divalent metal cation</name>
        <dbReference type="ChEBI" id="CHEBI:60240"/>
        <label>6</label>
        <note>in cluster A</note>
    </ligand>
</feature>
<feature type="binding site" evidence="2 4">
    <location>
        <position position="43"/>
    </location>
    <ligand>
        <name>a divalent metal cation</name>
        <dbReference type="ChEBI" id="CHEBI:60240"/>
        <label>4</label>
        <note>in cluster A</note>
    </ligand>
</feature>
<feature type="binding site" evidence="2 4">
    <location>
        <position position="43"/>
    </location>
    <ligand>
        <name>a divalent metal cation</name>
        <dbReference type="ChEBI" id="CHEBI:60240"/>
        <label>6</label>
        <note>in cluster A</note>
    </ligand>
</feature>
<feature type="binding site" evidence="2 4">
    <location>
        <position position="47"/>
    </location>
    <ligand>
        <name>a divalent metal cation</name>
        <dbReference type="ChEBI" id="CHEBI:60240"/>
        <label>4</label>
        <note>in cluster A</note>
    </ligand>
</feature>
<feature type="binding site" evidence="2 4">
    <location>
        <position position="49"/>
    </location>
    <ligand>
        <name>a divalent metal cation</name>
        <dbReference type="ChEBI" id="CHEBI:60240"/>
        <label>5</label>
        <note>in cluster A</note>
    </ligand>
</feature>
<feature type="binding site" evidence="2 4">
    <location>
        <position position="49"/>
    </location>
    <ligand>
        <name>a divalent metal cation</name>
        <dbReference type="ChEBI" id="CHEBI:60240"/>
        <label>7</label>
        <note>in cluster A</note>
    </ligand>
</feature>
<feature type="binding site" evidence="2 4">
    <location>
        <position position="54"/>
    </location>
    <ligand>
        <name>a divalent metal cation</name>
        <dbReference type="ChEBI" id="CHEBI:60240"/>
        <label>7</label>
        <note>in cluster A</note>
    </ligand>
</feature>
<feature type="binding site" evidence="2 4">
    <location>
        <position position="58"/>
    </location>
    <ligand>
        <name>a divalent metal cation</name>
        <dbReference type="ChEBI" id="CHEBI:60240"/>
        <label>7</label>
        <note>in cluster A</note>
    </ligand>
</feature>
<feature type="binding site" evidence="2 4">
    <location>
        <position position="59"/>
    </location>
    <ligand>
        <name>a divalent metal cation</name>
        <dbReference type="ChEBI" id="CHEBI:60240"/>
        <label>6</label>
        <note>in cluster A</note>
    </ligand>
</feature>
<feature type="binding site" evidence="2 4">
    <location>
        <position position="59"/>
    </location>
    <ligand>
        <name>a divalent metal cation</name>
        <dbReference type="ChEBI" id="CHEBI:60240"/>
        <label>7</label>
        <note>in cluster A</note>
    </ligand>
</feature>
<feature type="helix" evidence="7">
    <location>
        <begin position="5"/>
        <end position="9"/>
    </location>
</feature>
<feature type="strand" evidence="7">
    <location>
        <begin position="15"/>
        <end position="17"/>
    </location>
</feature>
<feature type="strand" evidence="7">
    <location>
        <begin position="20"/>
        <end position="22"/>
    </location>
</feature>
<feature type="turn" evidence="7">
    <location>
        <begin position="26"/>
        <end position="28"/>
    </location>
</feature>
<feature type="helix" evidence="6">
    <location>
        <begin position="41"/>
        <end position="44"/>
    </location>
</feature>
<feature type="helix" evidence="6">
    <location>
        <begin position="48"/>
        <end position="50"/>
    </location>
</feature>
<feature type="strand" evidence="6">
    <location>
        <begin position="52"/>
        <end position="55"/>
    </location>
</feature>
<feature type="turn" evidence="6">
    <location>
        <begin position="56"/>
        <end position="59"/>
    </location>
</feature>
<comment type="function">
    <text evidence="1">Metallothioneins have a high content of cysteine residues that bind various heavy metals.</text>
</comment>
<comment type="domain">
    <text>Class I metallothioneins contain 2 metal-binding domains: four divalent ions are chelated within cluster A of the alpha domain and are coordinated via cysteinyl thiolate bridges to 11 cysteine ligands. Cluster B, the corresponding region within the beta domain, can ligate three divalent ions to 9 cysteines.</text>
</comment>
<comment type="similarity">
    <text evidence="3">Belongs to the metallothionein superfamily. Type 1 family.</text>
</comment>
<protein>
    <recommendedName>
        <fullName>Metallothionein A</fullName>
        <shortName>MT-A</shortName>
    </recommendedName>
    <alternativeName>
        <fullName>MT_nc</fullName>
    </alternativeName>
</protein>
<keyword id="KW-0002">3D-structure</keyword>
<keyword id="KW-0479">Metal-binding</keyword>
<keyword id="KW-0480">Metal-thiolate cluster</keyword>
<reference key="1">
    <citation type="journal article" date="1999" name="Mol. Biol. Evol.">
        <title>Metallothioneins in antarctic fish: evidence for independent duplication and gene conversion.</title>
        <authorList>
            <person name="Bargelloni L."/>
            <person name="Scudiero R."/>
            <person name="Parisi E."/>
            <person name="Carginale V."/>
            <person name="Capasso C."/>
            <person name="Patarnello T."/>
        </authorList>
    </citation>
    <scope>NUCLEOTIDE SEQUENCE [MRNA]</scope>
    <source>
        <tissue>Liver</tissue>
    </source>
</reference>
<reference evidence="4 5" key="2">
    <citation type="journal article" date="2003" name="Structure">
        <title>Solution structure of MT_nc, a novel metallothionein from the Antarctic fish Notothenia coriiceps.</title>
        <authorList>
            <person name="Capasso C."/>
            <person name="Carginale V."/>
            <person name="Crescenzi O."/>
            <person name="Di Maro D."/>
            <person name="Parisi E."/>
            <person name="Spadaccini R."/>
            <person name="Temussi P.A."/>
        </authorList>
    </citation>
    <scope>STRUCTURE BY NMR IN COMPLEX WITH CADMIUM IONS</scope>
</reference>
<name>MTA_NOTNE</name>
<dbReference type="EMBL" id="AJ006484">
    <property type="protein sequence ID" value="CAA07063.1"/>
    <property type="molecule type" value="mRNA"/>
</dbReference>
<dbReference type="PDB" id="1M0G">
    <property type="method" value="NMR"/>
    <property type="chains" value="A=31-60"/>
</dbReference>
<dbReference type="PDB" id="1M0J">
    <property type="method" value="NMR"/>
    <property type="chains" value="A=2-29"/>
</dbReference>
<dbReference type="PDBsum" id="1M0G"/>
<dbReference type="PDBsum" id="1M0J"/>
<dbReference type="SMR" id="P62339"/>
<dbReference type="EvolutionaryTrace" id="P62339"/>
<dbReference type="GO" id="GO:0046872">
    <property type="term" value="F:metal ion binding"/>
    <property type="evidence" value="ECO:0007669"/>
    <property type="project" value="UniProtKB-KW"/>
</dbReference>
<dbReference type="FunFam" id="4.10.10.10:FF:000001">
    <property type="entry name" value="Metallothionein"/>
    <property type="match status" value="1"/>
</dbReference>
<dbReference type="Gene3D" id="4.10.10.10">
    <property type="entry name" value="Metallothionein Isoform II"/>
    <property type="match status" value="1"/>
</dbReference>
<dbReference type="InterPro" id="IPR017854">
    <property type="entry name" value="Metalthion_dom_sf"/>
</dbReference>
<dbReference type="InterPro" id="IPR023587">
    <property type="entry name" value="Metalthion_dom_sf_vert"/>
</dbReference>
<dbReference type="InterPro" id="IPR000006">
    <property type="entry name" value="Metalthion_vert"/>
</dbReference>
<dbReference type="InterPro" id="IPR018064">
    <property type="entry name" value="Metalthion_vert_metal_BS"/>
</dbReference>
<dbReference type="PANTHER" id="PTHR23299">
    <property type="entry name" value="METALLOTHIONEIN"/>
    <property type="match status" value="1"/>
</dbReference>
<dbReference type="PANTHER" id="PTHR23299:SF24">
    <property type="entry name" value="METALLOTHIONEIN-1X"/>
    <property type="match status" value="1"/>
</dbReference>
<dbReference type="Pfam" id="PF00131">
    <property type="entry name" value="Metallothio"/>
    <property type="match status" value="1"/>
</dbReference>
<dbReference type="PRINTS" id="PR00860">
    <property type="entry name" value="MTVERTEBRATE"/>
</dbReference>
<dbReference type="SUPFAM" id="SSF57868">
    <property type="entry name" value="Metallothionein"/>
    <property type="match status" value="1"/>
</dbReference>
<dbReference type="PROSITE" id="PS00203">
    <property type="entry name" value="METALLOTHIONEIN_VRT"/>
    <property type="match status" value="1"/>
</dbReference>
<accession>P62339</accession>
<accession>O73914</accession>